<keyword id="KW-0119">Carbohydrate metabolism</keyword>
<keyword id="KW-0961">Cell wall biogenesis/degradation</keyword>
<keyword id="KW-0325">Glycoprotein</keyword>
<keyword id="KW-0456">Lyase</keyword>
<keyword id="KW-0624">Polysaccharide degradation</keyword>
<keyword id="KW-1185">Reference proteome</keyword>
<keyword id="KW-0964">Secreted</keyword>
<keyword id="KW-0732">Signal</keyword>
<reference key="1">
    <citation type="journal article" date="2005" name="Nature">
        <title>Genome sequencing and analysis of Aspergillus oryzae.</title>
        <authorList>
            <person name="Machida M."/>
            <person name="Asai K."/>
            <person name="Sano M."/>
            <person name="Tanaka T."/>
            <person name="Kumagai T."/>
            <person name="Terai G."/>
            <person name="Kusumoto K."/>
            <person name="Arima T."/>
            <person name="Akita O."/>
            <person name="Kashiwagi Y."/>
            <person name="Abe K."/>
            <person name="Gomi K."/>
            <person name="Horiuchi H."/>
            <person name="Kitamoto K."/>
            <person name="Kobayashi T."/>
            <person name="Takeuchi M."/>
            <person name="Denning D.W."/>
            <person name="Galagan J.E."/>
            <person name="Nierman W.C."/>
            <person name="Yu J."/>
            <person name="Archer D.B."/>
            <person name="Bennett J.W."/>
            <person name="Bhatnagar D."/>
            <person name="Cleveland T.E."/>
            <person name="Fedorova N.D."/>
            <person name="Gotoh O."/>
            <person name="Horikawa H."/>
            <person name="Hosoyama A."/>
            <person name="Ichinomiya M."/>
            <person name="Igarashi R."/>
            <person name="Iwashita K."/>
            <person name="Juvvadi P.R."/>
            <person name="Kato M."/>
            <person name="Kato Y."/>
            <person name="Kin T."/>
            <person name="Kokubun A."/>
            <person name="Maeda H."/>
            <person name="Maeyama N."/>
            <person name="Maruyama J."/>
            <person name="Nagasaki H."/>
            <person name="Nakajima T."/>
            <person name="Oda K."/>
            <person name="Okada K."/>
            <person name="Paulsen I."/>
            <person name="Sakamoto K."/>
            <person name="Sawano T."/>
            <person name="Takahashi M."/>
            <person name="Takase K."/>
            <person name="Terabayashi Y."/>
            <person name="Wortman J.R."/>
            <person name="Yamada O."/>
            <person name="Yamagata Y."/>
            <person name="Anazawa H."/>
            <person name="Hata Y."/>
            <person name="Koide Y."/>
            <person name="Komori T."/>
            <person name="Koyama Y."/>
            <person name="Minetoki T."/>
            <person name="Suharnan S."/>
            <person name="Tanaka A."/>
            <person name="Isono K."/>
            <person name="Kuhara S."/>
            <person name="Ogasawara N."/>
            <person name="Kikuchi H."/>
        </authorList>
    </citation>
    <scope>NUCLEOTIDE SEQUENCE [LARGE SCALE GENOMIC DNA]</scope>
    <source>
        <strain>ATCC 42149 / RIB 40</strain>
    </source>
</reference>
<protein>
    <recommendedName>
        <fullName>Probable rhamnogalacturonate lyase C</fullName>
        <ecNumber>4.2.2.23</ecNumber>
    </recommendedName>
</protein>
<sequence>MFLPSRKALAFLACLASHSVALLTTSENSTHFNLANDRFSIALAKSNGHIVDVQLDGQDLLGPVDGNAGKGPYLDCSCIPSGFWTPGSGAHLELINGTDSTGTAYGGLYMSATYAGTNQTLSQWFFLRGEETGLHAFSRVTYFNETTPSLRSLGELRTLFRPSTDLWTHFSTSDGNYGPKPLGSNSGLVVQDATTYIGNVTDDPYVSQYSDYFTKYTLAESWRNHDVHGLFSDGSSSSDGSTFGAWLVHNTVETYYGGPLHSDLVVDGIVYNYLVSGHHGAPTPNLTHGFDRTWGPQFYYFNRGDSETTLADLRADAAKYADPEWNAEFYDSIADHIPNFTPSTGRTTFKGKVSLPKGAKRPIIVLSEDGQDFQLNVFNTESLQYWAEIDKSGSFSIPRVVEGTYRITIYADEIFGWFIQDHVKVLKSQSKDYSFTWKEESAGKEIWRIGIPDKSSGEYLHGYAPDTSKPLQPEQHRIYWGKYDYPADFPEGINFHVGKSDPSQDLNYIHWAFFPSQGNHLRTEPYYDNVNNWTVTFDLTADQLHNTNTATFTVQIAGAKTANGNAKWTPVEGKYSNLPWTVNVNGRYESTWVIPYWRSGSCGVRSAVSCQNIEQKFAFPSKNLQEGKNEFVLSLPFNASSTETALLPDALYVQARVMGSRLDPARPAPNPLVNSNLGFGRDNPIMEFSNNRIIT</sequence>
<gene>
    <name type="primary">rglC</name>
    <name type="ORF">AO090113000057</name>
</gene>
<feature type="signal peptide" evidence="2">
    <location>
        <begin position="1"/>
        <end position="21"/>
    </location>
</feature>
<feature type="chain" id="PRO_0000394380" description="Probable rhamnogalacturonate lyase C">
    <location>
        <begin position="22"/>
        <end position="695"/>
    </location>
</feature>
<feature type="glycosylation site" description="N-linked (GlcNAc...) asparagine" evidence="2">
    <location>
        <position position="28"/>
    </location>
</feature>
<feature type="glycosylation site" description="N-linked (GlcNAc...) asparagine" evidence="2">
    <location>
        <position position="96"/>
    </location>
</feature>
<feature type="glycosylation site" description="N-linked (GlcNAc...) asparagine" evidence="2">
    <location>
        <position position="118"/>
    </location>
</feature>
<feature type="glycosylation site" description="N-linked (GlcNAc...) asparagine" evidence="2">
    <location>
        <position position="144"/>
    </location>
</feature>
<feature type="glycosylation site" description="N-linked (GlcNAc...) asparagine" evidence="2">
    <location>
        <position position="199"/>
    </location>
</feature>
<feature type="glycosylation site" description="N-linked (GlcNAc...) asparagine" evidence="2">
    <location>
        <position position="285"/>
    </location>
</feature>
<feature type="glycosylation site" description="N-linked (GlcNAc...) asparagine" evidence="2">
    <location>
        <position position="532"/>
    </location>
</feature>
<feature type="glycosylation site" description="N-linked (GlcNAc...) asparagine" evidence="2">
    <location>
        <position position="638"/>
    </location>
</feature>
<comment type="function">
    <text evidence="1">Pectinolytic enzymes consist of four classes of enzymes: pectin lyase, polygalacturonase, pectin methylesterase and rhamnogalacturonase. Degrades the rhamnogalacturonan I (RG-I) backbone of pectin (By similarity).</text>
</comment>
<comment type="catalytic activity">
    <reaction>
        <text>Endotype eliminative cleavage of L-alpha-rhamnopyranosyl-(1-&gt;4)-alpha-D-galactopyranosyluronic acid bonds of rhamnogalacturonan I domains in ramified hairy regions of pectin leaving L-rhamnopyranose at the reducing end and 4-deoxy-4,5-unsaturated D-galactopyranosyluronic acid at the non-reducing end.</text>
        <dbReference type="EC" id="4.2.2.23"/>
    </reaction>
</comment>
<comment type="subcellular location">
    <subcellularLocation>
        <location evidence="1">Secreted</location>
    </subcellularLocation>
</comment>
<comment type="similarity">
    <text evidence="3">Belongs to the polysaccharide lyase 4 family.</text>
</comment>
<organism>
    <name type="scientific">Aspergillus oryzae (strain ATCC 42149 / RIB 40)</name>
    <name type="common">Yellow koji mold</name>
    <dbReference type="NCBI Taxonomy" id="510516"/>
    <lineage>
        <taxon>Eukaryota</taxon>
        <taxon>Fungi</taxon>
        <taxon>Dikarya</taxon>
        <taxon>Ascomycota</taxon>
        <taxon>Pezizomycotina</taxon>
        <taxon>Eurotiomycetes</taxon>
        <taxon>Eurotiomycetidae</taxon>
        <taxon>Eurotiales</taxon>
        <taxon>Aspergillaceae</taxon>
        <taxon>Aspergillus</taxon>
        <taxon>Aspergillus subgen. Circumdati</taxon>
    </lineage>
</organism>
<evidence type="ECO:0000250" key="1"/>
<evidence type="ECO:0000255" key="2"/>
<evidence type="ECO:0000305" key="3"/>
<accession>Q2U5P7</accession>
<dbReference type="EC" id="4.2.2.23"/>
<dbReference type="EMBL" id="BA000053">
    <property type="protein sequence ID" value="BAE63118.1"/>
    <property type="molecule type" value="Genomic_DNA"/>
</dbReference>
<dbReference type="SMR" id="Q2U5P7"/>
<dbReference type="STRING" id="510516.Q2U5P7"/>
<dbReference type="CAZy" id="PL4">
    <property type="family name" value="Polysaccharide Lyase Family 4"/>
</dbReference>
<dbReference type="GlyCosmos" id="Q2U5P7">
    <property type="glycosylation" value="8 sites, No reported glycans"/>
</dbReference>
<dbReference type="EnsemblFungi" id="BAE63118">
    <property type="protein sequence ID" value="BAE63118"/>
    <property type="gene ID" value="AO090113000057"/>
</dbReference>
<dbReference type="VEuPathDB" id="FungiDB:AO090113000057"/>
<dbReference type="HOGENOM" id="CLU_016624_0_0_1"/>
<dbReference type="OMA" id="AKGNHLR"/>
<dbReference type="Proteomes" id="UP000006564">
    <property type="component" value="Chromosome 5"/>
</dbReference>
<dbReference type="GO" id="GO:0005576">
    <property type="term" value="C:extracellular region"/>
    <property type="evidence" value="ECO:0007669"/>
    <property type="project" value="UniProtKB-SubCell"/>
</dbReference>
<dbReference type="GO" id="GO:0030246">
    <property type="term" value="F:carbohydrate binding"/>
    <property type="evidence" value="ECO:0007669"/>
    <property type="project" value="InterPro"/>
</dbReference>
<dbReference type="GO" id="GO:0102210">
    <property type="term" value="F:rhamnogalacturonan endolyase activity"/>
    <property type="evidence" value="ECO:0007669"/>
    <property type="project" value="UniProtKB-EC"/>
</dbReference>
<dbReference type="GO" id="GO:0071555">
    <property type="term" value="P:cell wall organization"/>
    <property type="evidence" value="ECO:0007669"/>
    <property type="project" value="UniProtKB-KW"/>
</dbReference>
<dbReference type="GO" id="GO:0000272">
    <property type="term" value="P:polysaccharide catabolic process"/>
    <property type="evidence" value="ECO:0007669"/>
    <property type="project" value="UniProtKB-KW"/>
</dbReference>
<dbReference type="CDD" id="cd10316">
    <property type="entry name" value="RGL4_M"/>
    <property type="match status" value="1"/>
</dbReference>
<dbReference type="CDD" id="cd10320">
    <property type="entry name" value="RGL4_N"/>
    <property type="match status" value="1"/>
</dbReference>
<dbReference type="Gene3D" id="2.70.98.10">
    <property type="match status" value="1"/>
</dbReference>
<dbReference type="Gene3D" id="2.60.40.1120">
    <property type="entry name" value="Carboxypeptidase-like, regulatory domain"/>
    <property type="match status" value="1"/>
</dbReference>
<dbReference type="Gene3D" id="2.60.120.260">
    <property type="entry name" value="Galactose-binding domain-like"/>
    <property type="match status" value="1"/>
</dbReference>
<dbReference type="InterPro" id="IPR013784">
    <property type="entry name" value="Carb-bd-like_fold"/>
</dbReference>
<dbReference type="InterPro" id="IPR011013">
    <property type="entry name" value="Gal_mutarotase_sf_dom"/>
</dbReference>
<dbReference type="InterPro" id="IPR008979">
    <property type="entry name" value="Galactose-bd-like_sf"/>
</dbReference>
<dbReference type="InterPro" id="IPR014718">
    <property type="entry name" value="GH-type_carb-bd"/>
</dbReference>
<dbReference type="InterPro" id="IPR051850">
    <property type="entry name" value="Polysacch_Lyase_4"/>
</dbReference>
<dbReference type="InterPro" id="IPR029413">
    <property type="entry name" value="RG-lyase_II"/>
</dbReference>
<dbReference type="InterPro" id="IPR029411">
    <property type="entry name" value="RG-lyase_III"/>
</dbReference>
<dbReference type="PANTHER" id="PTHR32018:SF9">
    <property type="entry name" value="RHAMNOGALACTURONATE LYASE B"/>
    <property type="match status" value="1"/>
</dbReference>
<dbReference type="PANTHER" id="PTHR32018">
    <property type="entry name" value="RHAMNOGALACTURONATE LYASE FAMILY PROTEIN"/>
    <property type="match status" value="1"/>
</dbReference>
<dbReference type="Pfam" id="PF14683">
    <property type="entry name" value="CBM-like"/>
    <property type="match status" value="1"/>
</dbReference>
<dbReference type="Pfam" id="PF14686">
    <property type="entry name" value="fn3_3"/>
    <property type="match status" value="1"/>
</dbReference>
<dbReference type="SUPFAM" id="SSF74650">
    <property type="entry name" value="Galactose mutarotase-like"/>
    <property type="match status" value="1"/>
</dbReference>
<dbReference type="SUPFAM" id="SSF49785">
    <property type="entry name" value="Galactose-binding domain-like"/>
    <property type="match status" value="1"/>
</dbReference>
<dbReference type="SUPFAM" id="SSF49452">
    <property type="entry name" value="Starch-binding domain-like"/>
    <property type="match status" value="1"/>
</dbReference>
<proteinExistence type="inferred from homology"/>
<name>RGLC_ASPOR</name>